<dbReference type="EC" id="3.1.11.6" evidence="1"/>
<dbReference type="EMBL" id="CR378665">
    <property type="protein sequence ID" value="CAG19192.1"/>
    <property type="molecule type" value="Genomic_DNA"/>
</dbReference>
<dbReference type="RefSeq" id="WP_011217534.1">
    <property type="nucleotide sequence ID" value="NC_006370.1"/>
</dbReference>
<dbReference type="SMR" id="Q6LU33"/>
<dbReference type="STRING" id="298386.PBPRA0779"/>
<dbReference type="KEGG" id="ppr:PBPRA0779"/>
<dbReference type="eggNOG" id="COG1570">
    <property type="taxonomic scope" value="Bacteria"/>
</dbReference>
<dbReference type="HOGENOM" id="CLU_023625_3_1_6"/>
<dbReference type="Proteomes" id="UP000000593">
    <property type="component" value="Chromosome 1"/>
</dbReference>
<dbReference type="GO" id="GO:0005737">
    <property type="term" value="C:cytoplasm"/>
    <property type="evidence" value="ECO:0007669"/>
    <property type="project" value="UniProtKB-SubCell"/>
</dbReference>
<dbReference type="GO" id="GO:0009318">
    <property type="term" value="C:exodeoxyribonuclease VII complex"/>
    <property type="evidence" value="ECO:0007669"/>
    <property type="project" value="InterPro"/>
</dbReference>
<dbReference type="GO" id="GO:0008855">
    <property type="term" value="F:exodeoxyribonuclease VII activity"/>
    <property type="evidence" value="ECO:0007669"/>
    <property type="project" value="UniProtKB-UniRule"/>
</dbReference>
<dbReference type="GO" id="GO:0003676">
    <property type="term" value="F:nucleic acid binding"/>
    <property type="evidence" value="ECO:0007669"/>
    <property type="project" value="InterPro"/>
</dbReference>
<dbReference type="GO" id="GO:0006308">
    <property type="term" value="P:DNA catabolic process"/>
    <property type="evidence" value="ECO:0007669"/>
    <property type="project" value="UniProtKB-UniRule"/>
</dbReference>
<dbReference type="CDD" id="cd04489">
    <property type="entry name" value="ExoVII_LU_OBF"/>
    <property type="match status" value="1"/>
</dbReference>
<dbReference type="HAMAP" id="MF_00378">
    <property type="entry name" value="Exonuc_7_L"/>
    <property type="match status" value="1"/>
</dbReference>
<dbReference type="InterPro" id="IPR003753">
    <property type="entry name" value="Exonuc_VII_L"/>
</dbReference>
<dbReference type="InterPro" id="IPR020579">
    <property type="entry name" value="Exonuc_VII_lsu_C"/>
</dbReference>
<dbReference type="InterPro" id="IPR025824">
    <property type="entry name" value="OB-fold_nuc-bd_dom"/>
</dbReference>
<dbReference type="NCBIfam" id="TIGR00237">
    <property type="entry name" value="xseA"/>
    <property type="match status" value="1"/>
</dbReference>
<dbReference type="PANTHER" id="PTHR30008">
    <property type="entry name" value="EXODEOXYRIBONUCLEASE 7 LARGE SUBUNIT"/>
    <property type="match status" value="1"/>
</dbReference>
<dbReference type="PANTHER" id="PTHR30008:SF0">
    <property type="entry name" value="EXODEOXYRIBONUCLEASE 7 LARGE SUBUNIT"/>
    <property type="match status" value="1"/>
</dbReference>
<dbReference type="Pfam" id="PF02601">
    <property type="entry name" value="Exonuc_VII_L"/>
    <property type="match status" value="1"/>
</dbReference>
<dbReference type="Pfam" id="PF13742">
    <property type="entry name" value="tRNA_anti_2"/>
    <property type="match status" value="1"/>
</dbReference>
<protein>
    <recommendedName>
        <fullName evidence="1">Exodeoxyribonuclease 7 large subunit</fullName>
        <ecNumber evidence="1">3.1.11.6</ecNumber>
    </recommendedName>
    <alternativeName>
        <fullName evidence="1">Exodeoxyribonuclease VII large subunit</fullName>
        <shortName evidence="1">Exonuclease VII large subunit</shortName>
    </alternativeName>
</protein>
<sequence length="448" mass="50149">MTLFTQTQSNDRIFTVSSLNAEVRLLLENEMGIVWLVGELSNLSMPVSGHWYFTLKDSRAQVKCAMFRGNNRRVTFKPANGTQVLVKARLSLYEPRGDYQLIIESMQPEGDGRLQQQFEQLKMSLAAEGLFAQALKKPLPEQPKRIGIITSKTGAALHDILTVLHRRDPSLPVVIYPTMVQGDGSAISIAQAIGRANARQECDVLIVGRGGGSLEDLWAFNEEIVARTIAASQIPIVSAVGHEVDVTIADFVADMRAPTPSAAAELVSRDITHQTQKIQQKNQQLKNAIRTYLSKREAKTVQLTHRLERQHPQLRLNQQQQHLDDISSRLERAMGRLLSSHHQHVERINYKLSLHSPVQTIKNNQTTLDQRKRRLLDAMDHRLLNANHKLALAAEKLETVSPLATLSRGYSITRDAKGKVIRHIDQVKPGDKLVTKVTDGEIHSTVSE</sequence>
<evidence type="ECO:0000255" key="1">
    <source>
        <dbReference type="HAMAP-Rule" id="MF_00378"/>
    </source>
</evidence>
<organism>
    <name type="scientific">Photobacterium profundum (strain SS9)</name>
    <dbReference type="NCBI Taxonomy" id="298386"/>
    <lineage>
        <taxon>Bacteria</taxon>
        <taxon>Pseudomonadati</taxon>
        <taxon>Pseudomonadota</taxon>
        <taxon>Gammaproteobacteria</taxon>
        <taxon>Vibrionales</taxon>
        <taxon>Vibrionaceae</taxon>
        <taxon>Photobacterium</taxon>
    </lineage>
</organism>
<gene>
    <name evidence="1" type="primary">xseA</name>
    <name type="ordered locus">PBPRA0779</name>
</gene>
<feature type="chain" id="PRO_0000273672" description="Exodeoxyribonuclease 7 large subunit">
    <location>
        <begin position="1"/>
        <end position="448"/>
    </location>
</feature>
<name>EX7L_PHOPR</name>
<accession>Q6LU33</accession>
<reference key="1">
    <citation type="journal article" date="2005" name="Science">
        <title>Life at depth: Photobacterium profundum genome sequence and expression analysis.</title>
        <authorList>
            <person name="Vezzi A."/>
            <person name="Campanaro S."/>
            <person name="D'Angelo M."/>
            <person name="Simonato F."/>
            <person name="Vitulo N."/>
            <person name="Lauro F.M."/>
            <person name="Cestaro A."/>
            <person name="Malacrida G."/>
            <person name="Simionati B."/>
            <person name="Cannata N."/>
            <person name="Romualdi C."/>
            <person name="Bartlett D.H."/>
            <person name="Valle G."/>
        </authorList>
    </citation>
    <scope>NUCLEOTIDE SEQUENCE [LARGE SCALE GENOMIC DNA]</scope>
    <source>
        <strain>ATCC BAA-1253 / SS9</strain>
    </source>
</reference>
<comment type="function">
    <text evidence="1">Bidirectionally degrades single-stranded DNA into large acid-insoluble oligonucleotides, which are then degraded further into small acid-soluble oligonucleotides.</text>
</comment>
<comment type="catalytic activity">
    <reaction evidence="1">
        <text>Exonucleolytic cleavage in either 5'- to 3'- or 3'- to 5'-direction to yield nucleoside 5'-phosphates.</text>
        <dbReference type="EC" id="3.1.11.6"/>
    </reaction>
</comment>
<comment type="subunit">
    <text evidence="1">Heterooligomer composed of large and small subunits.</text>
</comment>
<comment type="subcellular location">
    <subcellularLocation>
        <location evidence="1">Cytoplasm</location>
    </subcellularLocation>
</comment>
<comment type="similarity">
    <text evidence="1">Belongs to the XseA family.</text>
</comment>
<keyword id="KW-0963">Cytoplasm</keyword>
<keyword id="KW-0269">Exonuclease</keyword>
<keyword id="KW-0378">Hydrolase</keyword>
<keyword id="KW-0540">Nuclease</keyword>
<keyword id="KW-1185">Reference proteome</keyword>
<proteinExistence type="inferred from homology"/>